<accession>Q32H47</accession>
<name>MINE_SHIDS</name>
<comment type="function">
    <text evidence="1">Prevents the cell division inhibition by proteins MinC and MinD at internal division sites while permitting inhibition at polar sites. This ensures cell division at the proper site by restricting the formation of a division septum at the midpoint of the long axis of the cell.</text>
</comment>
<comment type="similarity">
    <text evidence="1">Belongs to the MinE family.</text>
</comment>
<feature type="chain" id="PRO_0000298190" description="Cell division topological specificity factor">
    <location>
        <begin position="1"/>
        <end position="88"/>
    </location>
</feature>
<proteinExistence type="inferred from homology"/>
<organism>
    <name type="scientific">Shigella dysenteriae serotype 1 (strain Sd197)</name>
    <dbReference type="NCBI Taxonomy" id="300267"/>
    <lineage>
        <taxon>Bacteria</taxon>
        <taxon>Pseudomonadati</taxon>
        <taxon>Pseudomonadota</taxon>
        <taxon>Gammaproteobacteria</taxon>
        <taxon>Enterobacterales</taxon>
        <taxon>Enterobacteriaceae</taxon>
        <taxon>Shigella</taxon>
    </lineage>
</organism>
<protein>
    <recommendedName>
        <fullName evidence="1">Cell division topological specificity factor</fullName>
    </recommendedName>
</protein>
<evidence type="ECO:0000255" key="1">
    <source>
        <dbReference type="HAMAP-Rule" id="MF_00262"/>
    </source>
</evidence>
<reference key="1">
    <citation type="journal article" date="2005" name="Nucleic Acids Res.">
        <title>Genome dynamics and diversity of Shigella species, the etiologic agents of bacillary dysentery.</title>
        <authorList>
            <person name="Yang F."/>
            <person name="Yang J."/>
            <person name="Zhang X."/>
            <person name="Chen L."/>
            <person name="Jiang Y."/>
            <person name="Yan Y."/>
            <person name="Tang X."/>
            <person name="Wang J."/>
            <person name="Xiong Z."/>
            <person name="Dong J."/>
            <person name="Xue Y."/>
            <person name="Zhu Y."/>
            <person name="Xu X."/>
            <person name="Sun L."/>
            <person name="Chen S."/>
            <person name="Nie H."/>
            <person name="Peng J."/>
            <person name="Xu J."/>
            <person name="Wang Y."/>
            <person name="Yuan Z."/>
            <person name="Wen Y."/>
            <person name="Yao Z."/>
            <person name="Shen Y."/>
            <person name="Qiang B."/>
            <person name="Hou Y."/>
            <person name="Yu J."/>
            <person name="Jin Q."/>
        </authorList>
    </citation>
    <scope>NUCLEOTIDE SEQUENCE [LARGE SCALE GENOMIC DNA]</scope>
    <source>
        <strain>Sd197</strain>
    </source>
</reference>
<sequence length="88" mass="10235">MALLDFFLSRKKNTANIAKERLQIIVAERRRSDAEPHYLPQLRKDILEVICKYVQIDPEMVTVQLEQKDGDISILELNVTLPEAEELK</sequence>
<dbReference type="EMBL" id="CP000034">
    <property type="protein sequence ID" value="ABB61358.1"/>
    <property type="molecule type" value="Genomic_DNA"/>
</dbReference>
<dbReference type="RefSeq" id="WP_001185665.1">
    <property type="nucleotide sequence ID" value="NC_007606.1"/>
</dbReference>
<dbReference type="RefSeq" id="YP_402849.1">
    <property type="nucleotide sequence ID" value="NC_007606.1"/>
</dbReference>
<dbReference type="SMR" id="Q32H47"/>
<dbReference type="STRING" id="300267.SDY_1205"/>
<dbReference type="EnsemblBacteria" id="ABB61358">
    <property type="protein sequence ID" value="ABB61358"/>
    <property type="gene ID" value="SDY_1205"/>
</dbReference>
<dbReference type="GeneID" id="93776260"/>
<dbReference type="KEGG" id="sdy:SDY_1205"/>
<dbReference type="PATRIC" id="fig|300267.13.peg.1428"/>
<dbReference type="HOGENOM" id="CLU_137929_2_2_6"/>
<dbReference type="Proteomes" id="UP000002716">
    <property type="component" value="Chromosome"/>
</dbReference>
<dbReference type="GO" id="GO:0051301">
    <property type="term" value="P:cell division"/>
    <property type="evidence" value="ECO:0007669"/>
    <property type="project" value="UniProtKB-KW"/>
</dbReference>
<dbReference type="GO" id="GO:0032955">
    <property type="term" value="P:regulation of division septum assembly"/>
    <property type="evidence" value="ECO:0007669"/>
    <property type="project" value="InterPro"/>
</dbReference>
<dbReference type="FunFam" id="3.30.1070.10:FF:000001">
    <property type="entry name" value="Cell division topological specificity factor"/>
    <property type="match status" value="1"/>
</dbReference>
<dbReference type="Gene3D" id="3.30.1070.10">
    <property type="entry name" value="Cell division topological specificity factor MinE"/>
    <property type="match status" value="1"/>
</dbReference>
<dbReference type="HAMAP" id="MF_00262">
    <property type="entry name" value="MinE"/>
    <property type="match status" value="1"/>
</dbReference>
<dbReference type="InterPro" id="IPR005527">
    <property type="entry name" value="MinE"/>
</dbReference>
<dbReference type="InterPro" id="IPR036707">
    <property type="entry name" value="MinE_sf"/>
</dbReference>
<dbReference type="NCBIfam" id="TIGR01215">
    <property type="entry name" value="minE"/>
    <property type="match status" value="1"/>
</dbReference>
<dbReference type="NCBIfam" id="NF001422">
    <property type="entry name" value="PRK00296.1"/>
    <property type="match status" value="1"/>
</dbReference>
<dbReference type="Pfam" id="PF03776">
    <property type="entry name" value="MinE"/>
    <property type="match status" value="1"/>
</dbReference>
<dbReference type="SUPFAM" id="SSF55229">
    <property type="entry name" value="Cell division protein MinE topological specificity domain"/>
    <property type="match status" value="1"/>
</dbReference>
<keyword id="KW-0131">Cell cycle</keyword>
<keyword id="KW-0132">Cell division</keyword>
<keyword id="KW-1185">Reference proteome</keyword>
<gene>
    <name evidence="1" type="primary">minE</name>
    <name type="ordered locus">SDY_1205</name>
</gene>